<accession>Q95LF9</accession>
<gene>
    <name type="primary">ACKR1</name>
    <name type="synonym">DARC</name>
    <name type="synonym">FY</name>
</gene>
<protein>
    <recommendedName>
        <fullName>Atypical chemokine receptor 1</fullName>
    </recommendedName>
    <alternativeName>
        <fullName>Duffy antigen/chemokine receptor</fullName>
    </alternativeName>
    <cdAntigenName>CD234</cdAntigenName>
</protein>
<reference key="1">
    <citation type="journal article" date="2004" name="Immunogenetics">
        <title>Sequence, evolution and ligand binding properties of mammalian Duffy antigen/receptor for chemokines.</title>
        <authorList>
            <person name="Tournamille C."/>
            <person name="Blancher A."/>
            <person name="Le Van Kim C."/>
            <person name="Gane P."/>
            <person name="Apoil P.-A."/>
            <person name="Nakamoto W."/>
            <person name="Cartron J.-P."/>
            <person name="Colin Y."/>
        </authorList>
    </citation>
    <scope>NUCLEOTIDE SEQUENCE [GENOMIC DNA]</scope>
</reference>
<evidence type="ECO:0000250" key="1"/>
<evidence type="ECO:0000255" key="2"/>
<evidence type="ECO:0000305" key="3"/>
<name>ACKR1_GORGO</name>
<keyword id="KW-1015">Disulfide bond</keyword>
<keyword id="KW-0967">Endosome</keyword>
<keyword id="KW-0297">G-protein coupled receptor</keyword>
<keyword id="KW-0325">Glycoprotein</keyword>
<keyword id="KW-0472">Membrane</keyword>
<keyword id="KW-0675">Receptor</keyword>
<keyword id="KW-1185">Reference proteome</keyword>
<keyword id="KW-0807">Transducer</keyword>
<keyword id="KW-0812">Transmembrane</keyword>
<keyword id="KW-1133">Transmembrane helix</keyword>
<feature type="chain" id="PRO_0000152584" description="Atypical chemokine receptor 1">
    <location>
        <begin position="1"/>
        <end position="336"/>
    </location>
</feature>
<feature type="topological domain" description="Extracellular" evidence="2">
    <location>
        <begin position="1"/>
        <end position="63"/>
    </location>
</feature>
<feature type="transmembrane region" description="Helical; Name=1" evidence="2">
    <location>
        <begin position="64"/>
        <end position="84"/>
    </location>
</feature>
<feature type="topological domain" description="Cytoplasmic" evidence="2">
    <location>
        <begin position="85"/>
        <end position="95"/>
    </location>
</feature>
<feature type="transmembrane region" description="Helical; Name=2" evidence="2">
    <location>
        <begin position="96"/>
        <end position="116"/>
    </location>
</feature>
<feature type="topological domain" description="Extracellular" evidence="2">
    <location>
        <begin position="117"/>
        <end position="129"/>
    </location>
</feature>
<feature type="transmembrane region" description="Helical; Name=3" evidence="2">
    <location>
        <begin position="130"/>
        <end position="153"/>
    </location>
</feature>
<feature type="topological domain" description="Cytoplasmic" evidence="2">
    <location>
        <begin position="154"/>
        <end position="166"/>
    </location>
</feature>
<feature type="transmembrane region" description="Helical; Name=4" evidence="2">
    <location>
        <begin position="167"/>
        <end position="187"/>
    </location>
</feature>
<feature type="topological domain" description="Extracellular" evidence="2">
    <location>
        <begin position="188"/>
        <end position="207"/>
    </location>
</feature>
<feature type="transmembrane region" description="Helical; Name=5" evidence="2">
    <location>
        <begin position="208"/>
        <end position="228"/>
    </location>
</feature>
<feature type="topological domain" description="Cytoplasmic" evidence="2">
    <location>
        <begin position="229"/>
        <end position="244"/>
    </location>
</feature>
<feature type="transmembrane region" description="Helical; Name=6" evidence="2">
    <location>
        <begin position="245"/>
        <end position="265"/>
    </location>
</feature>
<feature type="topological domain" description="Extracellular" evidence="2">
    <location>
        <begin position="266"/>
        <end position="287"/>
    </location>
</feature>
<feature type="transmembrane region" description="Helical; Name=7" evidence="2">
    <location>
        <begin position="288"/>
        <end position="308"/>
    </location>
</feature>
<feature type="topological domain" description="Cytoplasmic" evidence="2">
    <location>
        <begin position="309"/>
        <end position="336"/>
    </location>
</feature>
<feature type="glycosylation site" description="N-linked (GlcNAc...) asparagine" evidence="2">
    <location>
        <position position="16"/>
    </location>
</feature>
<feature type="glycosylation site" description="N-linked (GlcNAc...) asparagine" evidence="2">
    <location>
        <position position="27"/>
    </location>
</feature>
<feature type="glycosylation site" description="N-linked (GlcNAc...) asparagine" evidence="2">
    <location>
        <position position="33"/>
    </location>
</feature>
<feature type="disulfide bond" evidence="1">
    <location>
        <begin position="51"/>
        <end position="276"/>
    </location>
</feature>
<feature type="disulfide bond" evidence="1">
    <location>
        <begin position="129"/>
        <end position="195"/>
    </location>
</feature>
<proteinExistence type="inferred from homology"/>
<organism>
    <name type="scientific">Gorilla gorilla gorilla</name>
    <name type="common">Western lowland gorilla</name>
    <dbReference type="NCBI Taxonomy" id="9595"/>
    <lineage>
        <taxon>Eukaryota</taxon>
        <taxon>Metazoa</taxon>
        <taxon>Chordata</taxon>
        <taxon>Craniata</taxon>
        <taxon>Vertebrata</taxon>
        <taxon>Euteleostomi</taxon>
        <taxon>Mammalia</taxon>
        <taxon>Eutheria</taxon>
        <taxon>Euarchontoglires</taxon>
        <taxon>Primates</taxon>
        <taxon>Haplorrhini</taxon>
        <taxon>Catarrhini</taxon>
        <taxon>Hominidae</taxon>
        <taxon>Gorilla</taxon>
    </lineage>
</organism>
<sequence>MGNCLHTAELSPSTENSSQLDFEDAWNSSYDVNYSFPDVDYDANLEAAAPCHSCNLLDDSALPFFILTSVLGILASSTVLFILFRPLFRWQLCPGWPVLAQLAVGSALFSIVVPILAPGLGSTHSSALCSLGYCVWYGSAFAQALLLGCHASLGHRLGAGQVPGLTLGLTVGIWGVAALLTLPVTLASGASGGLCTPIHSTELKALQATHTVACLAIFVLLPLGLFGAKGLKKALGMGPGPWMNILWAWFIFWWPHGVVLGLDFLVRSKLLLLSTCLAQQALDLLLNLAEALAILHCVATPLILALFYHQATRTLLPSLPLPEGWSSHLDTLGSKS</sequence>
<dbReference type="EMBL" id="AF311914">
    <property type="protein sequence ID" value="AAL09449.1"/>
    <property type="molecule type" value="Genomic_DNA"/>
</dbReference>
<dbReference type="RefSeq" id="XP_004027105.1">
    <property type="nucleotide sequence ID" value="XM_004027056.5"/>
</dbReference>
<dbReference type="SMR" id="Q95LF9"/>
<dbReference type="FunCoup" id="Q95LF9">
    <property type="interactions" value="281"/>
</dbReference>
<dbReference type="STRING" id="9593.ENSGGOP00000005032"/>
<dbReference type="GlyCosmos" id="Q95LF9">
    <property type="glycosylation" value="3 sites, No reported glycans"/>
</dbReference>
<dbReference type="Ensembl" id="ENSGGOT00000005162.3">
    <property type="protein sequence ID" value="ENSGGOP00000005032.2"/>
    <property type="gene ID" value="ENSGGOG00000005139.3"/>
</dbReference>
<dbReference type="GeneID" id="101153049"/>
<dbReference type="KEGG" id="ggo:101153049"/>
<dbReference type="CTD" id="2532"/>
<dbReference type="eggNOG" id="ENOG502SNW7">
    <property type="taxonomic scope" value="Eukaryota"/>
</dbReference>
<dbReference type="GeneTree" id="ENSGT00390000006372"/>
<dbReference type="HOGENOM" id="CLU_813693_0_0_1"/>
<dbReference type="InParanoid" id="Q95LF9"/>
<dbReference type="OMA" id="VWYSSAF"/>
<dbReference type="OrthoDB" id="14711at9604"/>
<dbReference type="Proteomes" id="UP000001519">
    <property type="component" value="Chromosome 1"/>
</dbReference>
<dbReference type="Bgee" id="ENSGGOG00000005139">
    <property type="expression patterns" value="Expressed in cerebellum and 5 other cell types or tissues"/>
</dbReference>
<dbReference type="GO" id="GO:0005769">
    <property type="term" value="C:early endosome"/>
    <property type="evidence" value="ECO:0007669"/>
    <property type="project" value="UniProtKB-SubCell"/>
</dbReference>
<dbReference type="GO" id="GO:0016020">
    <property type="term" value="C:membrane"/>
    <property type="evidence" value="ECO:0007669"/>
    <property type="project" value="UniProtKB-SubCell"/>
</dbReference>
<dbReference type="GO" id="GO:0055037">
    <property type="term" value="C:recycling endosome"/>
    <property type="evidence" value="ECO:0007669"/>
    <property type="project" value="UniProtKB-SubCell"/>
</dbReference>
<dbReference type="GO" id="GO:0019957">
    <property type="term" value="F:C-C chemokine binding"/>
    <property type="evidence" value="ECO:0000318"/>
    <property type="project" value="GO_Central"/>
</dbReference>
<dbReference type="GO" id="GO:0004930">
    <property type="term" value="F:G protein-coupled receptor activity"/>
    <property type="evidence" value="ECO:0007669"/>
    <property type="project" value="UniProtKB-KW"/>
</dbReference>
<dbReference type="GO" id="GO:0070098">
    <property type="term" value="P:chemokine-mediated signaling pathway"/>
    <property type="evidence" value="ECO:0007669"/>
    <property type="project" value="InterPro"/>
</dbReference>
<dbReference type="GO" id="GO:0006954">
    <property type="term" value="P:inflammatory response"/>
    <property type="evidence" value="ECO:0000318"/>
    <property type="project" value="GO_Central"/>
</dbReference>
<dbReference type="GO" id="GO:0032642">
    <property type="term" value="P:regulation of chemokine production"/>
    <property type="evidence" value="ECO:0000318"/>
    <property type="project" value="GO_Central"/>
</dbReference>
<dbReference type="CDD" id="cd15010">
    <property type="entry name" value="7tmA_ACKR1_DARC"/>
    <property type="match status" value="1"/>
</dbReference>
<dbReference type="FunFam" id="1.20.1070.10:FF:000266">
    <property type="entry name" value="Atypical chemokine receptor 1"/>
    <property type="match status" value="1"/>
</dbReference>
<dbReference type="Gene3D" id="1.20.1070.10">
    <property type="entry name" value="Rhodopsin 7-helix transmembrane proteins"/>
    <property type="match status" value="1"/>
</dbReference>
<dbReference type="InterPro" id="IPR005384">
    <property type="entry name" value="Duffy_chemokine_rcpt"/>
</dbReference>
<dbReference type="PANTHER" id="PTHR14181:SF1">
    <property type="entry name" value="ATYPICAL CHEMOKINE RECEPTOR 1"/>
    <property type="match status" value="1"/>
</dbReference>
<dbReference type="PANTHER" id="PTHR14181">
    <property type="entry name" value="DUFFY ANTIGEN/CHEMOKINE RECEPTOR"/>
    <property type="match status" value="1"/>
</dbReference>
<dbReference type="PRINTS" id="PR01559">
    <property type="entry name" value="DUFFYANTIGEN"/>
</dbReference>
<dbReference type="SUPFAM" id="SSF81321">
    <property type="entry name" value="Family A G protein-coupled receptor-like"/>
    <property type="match status" value="1"/>
</dbReference>
<comment type="function">
    <text evidence="1">Atypical chemokine receptor that controls chemokine levels and localization via high-affinity chemokine binding that is uncoupled from classic ligand-driven signal transduction cascades, resulting instead in chemokine sequestration, degradation, or transcytosis. Also known as interceptor (internalizing receptor) or chemokine-scavenging receptor or chemokine decoy receptor. Has a promiscuous chemokine-binding profile, interacting with inflammatory chemokines of both the CXC and the CC subfamilies but not with homeostatic chemokines. Acts as a receptor for chemokines including CCL2, CCL5, CCL7, CCL11, CCL13, CCL14, CCL17, CXCL5, CXCL6, IL8/CXCL8, CXCL11, GRO, RANTES, MCP-1 and TARC. May regulate chemokine bioavailability and, consequently, leukocyte recruitment through two distinct mechanisms: when expressed in endothelial cells, it sustains the abluminal to luminal transcytosis of tissue-derived chemokines and their subsequent presentation to circulating leukocytes; when expressed in erythrocytes, serves as blood reservoir of cognate chemokines but also as a chemokine sink, buffering potential surges in plasma chemokine levels (By similarity).</text>
</comment>
<comment type="subcellular location">
    <subcellularLocation>
        <location evidence="1">Early endosome</location>
    </subcellularLocation>
    <subcellularLocation>
        <location evidence="1">Recycling endosome</location>
    </subcellularLocation>
    <subcellularLocation>
        <location>Membrane</location>
        <topology>Multi-pass membrane protein</topology>
    </subcellularLocation>
    <text evidence="1">Predominantly localizes to endocytic vesicles, and upon stimulation by the ligand is internalized via caveolae. Once internalized, the ligand dissociates from the receptor, and is targeted to degradation while the receptor is recycled back to the cell membrane (By similarity).</text>
</comment>
<comment type="similarity">
    <text evidence="3">Belongs to the G-protein coupled receptor 1 family. Atypical chemokine receptor subfamily.</text>
</comment>